<comment type="function">
    <text evidence="1">Metalloproteinase inhibitor that functions by forming one to one complexes with target metalloproteinases, such as collagenases, and irreversibly inactivates them by binding to their catalytic zinc cofactor. Acts on MMP1, MMP2, MMP3, MMP7, MMP8, MMP9, MMP10, MMP11, MMP12, MMP13 and MMP16. Does not act on MMP14. Also functions as a growth factor that regulates cell differentiation, migration and cell death and activates cellular signaling cascades via CD63 and ITGB1. Plays a role in integrin signaling (By similarity).</text>
</comment>
<comment type="subunit">
    <text evidence="1">Interacts with MMP1, MMP3, MMP10 and MMP13, but has only very low affinity for MMP14. Interacts with CD63; identified in a complex with CD63 and ITGB1 (By similarity).</text>
</comment>
<comment type="subcellular location">
    <subcellularLocation>
        <location evidence="1">Secreted</location>
    </subcellularLocation>
</comment>
<comment type="PTM">
    <text evidence="1">The activity of TIMP1 is dependent on the presence of disulfide bonds.</text>
</comment>
<comment type="PTM">
    <text evidence="1">N-glycosylated.</text>
</comment>
<comment type="similarity">
    <text evidence="6">Belongs to the protease inhibitor I35 (TIMP) family.</text>
</comment>
<organism>
    <name type="scientific">Oryctolagus cuniculus</name>
    <name type="common">Rabbit</name>
    <dbReference type="NCBI Taxonomy" id="9986"/>
    <lineage>
        <taxon>Eukaryota</taxon>
        <taxon>Metazoa</taxon>
        <taxon>Chordata</taxon>
        <taxon>Craniata</taxon>
        <taxon>Vertebrata</taxon>
        <taxon>Euteleostomi</taxon>
        <taxon>Mammalia</taxon>
        <taxon>Eutheria</taxon>
        <taxon>Euarchontoglires</taxon>
        <taxon>Glires</taxon>
        <taxon>Lagomorpha</taxon>
        <taxon>Leporidae</taxon>
        <taxon>Oryctolagus</taxon>
    </lineage>
</organism>
<gene>
    <name type="primary">TIMP1</name>
</gene>
<keyword id="KW-1015">Disulfide bond</keyword>
<keyword id="KW-0325">Glycoprotein</keyword>
<keyword id="KW-0339">Growth factor</keyword>
<keyword id="KW-0479">Metal-binding</keyword>
<keyword id="KW-0481">Metalloenzyme inhibitor</keyword>
<keyword id="KW-0483">Metalloprotease inhibitor</keyword>
<keyword id="KW-0597">Phosphoprotein</keyword>
<keyword id="KW-0646">Protease inhibitor</keyword>
<keyword id="KW-1185">Reference proteome</keyword>
<keyword id="KW-0964">Secreted</keyword>
<keyword id="KW-0732">Signal</keyword>
<keyword id="KW-0862">Zinc</keyword>
<reference key="1">
    <citation type="journal article" date="1989" name="J. Biol. Chem.">
        <title>Hyperoxic exposure alters gene expression in the lung. Induction of the tissue inhibitor of metalloproteinases mRNA and other mRNAs.</title>
        <authorList>
            <person name="Horowitz S."/>
            <person name="Dafni N."/>
            <person name="Shapiro D.L."/>
            <person name="Holm B.A."/>
            <person name="Notter R.H."/>
            <person name="Quible D.J."/>
        </authorList>
    </citation>
    <scope>NUCLEOTIDE SEQUENCE [MRNA]</scope>
</reference>
<reference key="2">
    <citation type="submission" date="2004-11" db="EMBL/GenBank/DDBJ databases">
        <title>Characterization and sequencing of the rabbit TIMP-1 gene.</title>
        <authorList>
            <person name="Estelle J."/>
            <person name="Sastre Y."/>
            <person name="Merchan M."/>
            <person name="Folch J.M."/>
        </authorList>
    </citation>
    <scope>NUCLEOTIDE SEQUENCE [GENOMIC DNA]</scope>
</reference>
<dbReference type="EMBL" id="J04712">
    <property type="protein sequence ID" value="AAA31478.1"/>
    <property type="molecule type" value="mRNA"/>
</dbReference>
<dbReference type="EMBL" id="AY829731">
    <property type="protein sequence ID" value="AAW79054.1"/>
    <property type="molecule type" value="Genomic_DNA"/>
</dbReference>
<dbReference type="PIR" id="A33350">
    <property type="entry name" value="A33350"/>
</dbReference>
<dbReference type="RefSeq" id="NP_001075701.2">
    <property type="nucleotide sequence ID" value="NM_001082232.2"/>
</dbReference>
<dbReference type="SMR" id="P20614"/>
<dbReference type="FunCoup" id="P20614">
    <property type="interactions" value="46"/>
</dbReference>
<dbReference type="STRING" id="9986.ENSOCUP00000009228"/>
<dbReference type="GlyCosmos" id="P20614">
    <property type="glycosylation" value="2 sites, No reported glycans"/>
</dbReference>
<dbReference type="PaxDb" id="9986-ENSOCUP00000009228"/>
<dbReference type="GeneID" id="100009047"/>
<dbReference type="KEGG" id="ocu:100009047"/>
<dbReference type="CTD" id="7076"/>
<dbReference type="eggNOG" id="KOG4745">
    <property type="taxonomic scope" value="Eukaryota"/>
</dbReference>
<dbReference type="InParanoid" id="P20614"/>
<dbReference type="OrthoDB" id="6041373at2759"/>
<dbReference type="TreeFam" id="TF317409"/>
<dbReference type="Proteomes" id="UP000001811">
    <property type="component" value="Unplaced"/>
</dbReference>
<dbReference type="GO" id="GO:0031012">
    <property type="term" value="C:extracellular matrix"/>
    <property type="evidence" value="ECO:0007669"/>
    <property type="project" value="TreeGrafter"/>
</dbReference>
<dbReference type="GO" id="GO:0005615">
    <property type="term" value="C:extracellular space"/>
    <property type="evidence" value="ECO:0000250"/>
    <property type="project" value="UniProtKB"/>
</dbReference>
<dbReference type="GO" id="GO:0005125">
    <property type="term" value="F:cytokine activity"/>
    <property type="evidence" value="ECO:0000250"/>
    <property type="project" value="UniProtKB"/>
</dbReference>
<dbReference type="GO" id="GO:0008083">
    <property type="term" value="F:growth factor activity"/>
    <property type="evidence" value="ECO:0007669"/>
    <property type="project" value="UniProtKB-KW"/>
</dbReference>
<dbReference type="GO" id="GO:0046872">
    <property type="term" value="F:metal ion binding"/>
    <property type="evidence" value="ECO:0007669"/>
    <property type="project" value="UniProtKB-KW"/>
</dbReference>
<dbReference type="GO" id="GO:0008191">
    <property type="term" value="F:metalloendopeptidase inhibitor activity"/>
    <property type="evidence" value="ECO:0000250"/>
    <property type="project" value="UniProtKB"/>
</dbReference>
<dbReference type="GO" id="GO:0002020">
    <property type="term" value="F:protease binding"/>
    <property type="evidence" value="ECO:0007669"/>
    <property type="project" value="TreeGrafter"/>
</dbReference>
<dbReference type="GO" id="GO:0071492">
    <property type="term" value="P:cellular response to UV-A"/>
    <property type="evidence" value="ECO:0000250"/>
    <property type="project" value="UniProtKB"/>
</dbReference>
<dbReference type="GO" id="GO:0043086">
    <property type="term" value="P:negative regulation of catalytic activity"/>
    <property type="evidence" value="ECO:0000250"/>
    <property type="project" value="UniProtKB"/>
</dbReference>
<dbReference type="GO" id="GO:0010951">
    <property type="term" value="P:negative regulation of endopeptidase activity"/>
    <property type="evidence" value="ECO:0000250"/>
    <property type="project" value="UniProtKB"/>
</dbReference>
<dbReference type="GO" id="GO:0051045">
    <property type="term" value="P:negative regulation of membrane protein ectodomain proteolysis"/>
    <property type="evidence" value="ECO:0007669"/>
    <property type="project" value="TreeGrafter"/>
</dbReference>
<dbReference type="GO" id="GO:0008284">
    <property type="term" value="P:positive regulation of cell population proliferation"/>
    <property type="evidence" value="ECO:0000250"/>
    <property type="project" value="UniProtKB"/>
</dbReference>
<dbReference type="GO" id="GO:2001044">
    <property type="term" value="P:regulation of integrin-mediated signaling pathway"/>
    <property type="evidence" value="ECO:0000250"/>
    <property type="project" value="UniProtKB"/>
</dbReference>
<dbReference type="GO" id="GO:0034097">
    <property type="term" value="P:response to cytokine"/>
    <property type="evidence" value="ECO:0007669"/>
    <property type="project" value="TreeGrafter"/>
</dbReference>
<dbReference type="GO" id="GO:0009725">
    <property type="term" value="P:response to hormone"/>
    <property type="evidence" value="ECO:0007669"/>
    <property type="project" value="TreeGrafter"/>
</dbReference>
<dbReference type="FunFam" id="2.40.50.120:FF:000016">
    <property type="entry name" value="Metalloproteinase inhibitor 1"/>
    <property type="match status" value="1"/>
</dbReference>
<dbReference type="FunFam" id="3.90.370.10:FF:000001">
    <property type="entry name" value="Metalloproteinase inhibitor 3"/>
    <property type="match status" value="1"/>
</dbReference>
<dbReference type="Gene3D" id="2.40.50.120">
    <property type="match status" value="1"/>
</dbReference>
<dbReference type="Gene3D" id="3.90.370.10">
    <property type="entry name" value="Tissue inhibitor of metalloproteinase-1. Chain B, domain 1"/>
    <property type="match status" value="1"/>
</dbReference>
<dbReference type="InterPro" id="IPR001134">
    <property type="entry name" value="Netrin_domain"/>
</dbReference>
<dbReference type="InterPro" id="IPR001820">
    <property type="entry name" value="TIMP"/>
</dbReference>
<dbReference type="InterPro" id="IPR008993">
    <property type="entry name" value="TIMP-like_OB-fold"/>
</dbReference>
<dbReference type="InterPro" id="IPR027465">
    <property type="entry name" value="TIMP_C"/>
</dbReference>
<dbReference type="InterPro" id="IPR030490">
    <property type="entry name" value="TIMP_CS"/>
</dbReference>
<dbReference type="PANTHER" id="PTHR11844">
    <property type="entry name" value="METALLOPROTEASE INHIBITOR"/>
    <property type="match status" value="1"/>
</dbReference>
<dbReference type="PANTHER" id="PTHR11844:SF20">
    <property type="entry name" value="METALLOPROTEINASE INHIBITOR 1"/>
    <property type="match status" value="1"/>
</dbReference>
<dbReference type="Pfam" id="PF00965">
    <property type="entry name" value="TIMP"/>
    <property type="match status" value="1"/>
</dbReference>
<dbReference type="SMART" id="SM00206">
    <property type="entry name" value="NTR"/>
    <property type="match status" value="1"/>
</dbReference>
<dbReference type="SUPFAM" id="SSF50242">
    <property type="entry name" value="TIMP-like"/>
    <property type="match status" value="1"/>
</dbReference>
<dbReference type="PROSITE" id="PS50189">
    <property type="entry name" value="NTR"/>
    <property type="match status" value="1"/>
</dbReference>
<dbReference type="PROSITE" id="PS00288">
    <property type="entry name" value="TIMP"/>
    <property type="match status" value="1"/>
</dbReference>
<sequence>MAPLAALASSMLLLLWLVAPSRACTCVPPHPQTAFCNSDLVIRAKFVGAPEVNHTTLYQRYEIKTTKMFKGFDALGHATDIRFVYTPAMESVCGYSHKSQNRSEEFLIAGQLRNGLLHITTCSFVVPWNSLSFSQRSGFTKTYAAGCDMCTVFACASIPCHLESDTHCLWTDQLLLGSDKGFQSRHLACLPQEPGLCAWQSLRPRKD</sequence>
<evidence type="ECO:0000250" key="1"/>
<evidence type="ECO:0000250" key="2">
    <source>
        <dbReference type="UniProtKB" id="P01033"/>
    </source>
</evidence>
<evidence type="ECO:0000250" key="3">
    <source>
        <dbReference type="UniProtKB" id="P16035"/>
    </source>
</evidence>
<evidence type="ECO:0000255" key="4"/>
<evidence type="ECO:0000255" key="5">
    <source>
        <dbReference type="PROSITE-ProRule" id="PRU00295"/>
    </source>
</evidence>
<evidence type="ECO:0000305" key="6"/>
<accession>P20614</accession>
<accession>Q5ENG6</accession>
<proteinExistence type="evidence at transcript level"/>
<feature type="signal peptide">
    <location>
        <begin position="1"/>
        <end position="23"/>
    </location>
</feature>
<feature type="chain" id="PRO_0000034328" description="Metalloproteinase inhibitor 1">
    <location>
        <begin position="24"/>
        <end position="207"/>
    </location>
</feature>
<feature type="domain" description="NTR" evidence="5">
    <location>
        <begin position="24"/>
        <end position="147"/>
    </location>
</feature>
<feature type="region of interest" description="Involved in metalloproteinase-binding" evidence="3">
    <location>
        <begin position="24"/>
        <end position="27"/>
    </location>
</feature>
<feature type="region of interest" description="Involved in metalloproteinase-binding" evidence="3">
    <location>
        <begin position="90"/>
        <end position="91"/>
    </location>
</feature>
<feature type="binding site" evidence="3">
    <location>
        <position position="24"/>
    </location>
    <ligand>
        <name>Zn(2+)</name>
        <dbReference type="ChEBI" id="CHEBI:29105"/>
        <note>ligand shared with metalloproteinase partner</note>
    </ligand>
</feature>
<feature type="site" description="Involved in metalloproteinase-binding" evidence="3">
    <location>
        <position position="37"/>
    </location>
</feature>
<feature type="modified residue" description="Phosphoserine" evidence="2">
    <location>
        <position position="178"/>
    </location>
</feature>
<feature type="glycosylation site" description="N-linked (GlcNAc...) asparagine" evidence="4">
    <location>
        <position position="53"/>
    </location>
</feature>
<feature type="glycosylation site" description="N-linked (GlcNAc...) asparagine" evidence="4">
    <location>
        <position position="101"/>
    </location>
</feature>
<feature type="disulfide bond" evidence="5">
    <location>
        <begin position="24"/>
        <end position="93"/>
    </location>
</feature>
<feature type="disulfide bond" evidence="5">
    <location>
        <begin position="26"/>
        <end position="122"/>
    </location>
</feature>
<feature type="disulfide bond" evidence="5">
    <location>
        <begin position="36"/>
        <end position="147"/>
    </location>
</feature>
<feature type="disulfide bond" evidence="5">
    <location>
        <begin position="150"/>
        <end position="197"/>
    </location>
</feature>
<feature type="disulfide bond" evidence="5">
    <location>
        <begin position="155"/>
        <end position="160"/>
    </location>
</feature>
<feature type="disulfide bond" evidence="5">
    <location>
        <begin position="168"/>
        <end position="189"/>
    </location>
</feature>
<feature type="sequence conflict" description="In Ref. 1; AAA31478." evidence="6" ref="1">
    <original>QLL</original>
    <variation>SS</variation>
    <location>
        <begin position="173"/>
        <end position="175"/>
    </location>
</feature>
<feature type="sequence conflict" description="In Ref. 1; AAA31478." evidence="6" ref="1">
    <original>Q</original>
    <variation>E</variation>
    <location>
        <position position="200"/>
    </location>
</feature>
<protein>
    <recommendedName>
        <fullName>Metalloproteinase inhibitor 1</fullName>
    </recommendedName>
    <alternativeName>
        <fullName>Tissue inhibitor of metalloproteinases 1</fullName>
        <shortName>TIMP-1</shortName>
    </alternativeName>
</protein>
<name>TIMP1_RABIT</name>